<dbReference type="EC" id="3.1.4.-" evidence="2"/>
<dbReference type="EC" id="3.1.4.38" evidence="2"/>
<dbReference type="EMBL" id="BC158772">
    <property type="protein sequence ID" value="AAI58773.1"/>
    <property type="molecule type" value="mRNA"/>
</dbReference>
<dbReference type="RefSeq" id="NP_001402007.1">
    <property type="nucleotide sequence ID" value="NM_001415078.1"/>
</dbReference>
<dbReference type="RefSeq" id="XP_006253218.1">
    <property type="nucleotide sequence ID" value="XM_006253156.3"/>
</dbReference>
<dbReference type="SMR" id="B0BND0"/>
<dbReference type="BioGRID" id="258461">
    <property type="interactions" value="1"/>
</dbReference>
<dbReference type="FunCoup" id="B0BND0">
    <property type="interactions" value="9"/>
</dbReference>
<dbReference type="IntAct" id="B0BND0">
    <property type="interactions" value="1"/>
</dbReference>
<dbReference type="MINT" id="B0BND0"/>
<dbReference type="STRING" id="10116.ENSRNOP00000013005"/>
<dbReference type="GlyCosmos" id="B0BND0">
    <property type="glycosylation" value="4 sites, 4 glycans"/>
</dbReference>
<dbReference type="GlyGen" id="B0BND0">
    <property type="glycosylation" value="4 sites, 4 N-linked glycans (1 site)"/>
</dbReference>
<dbReference type="iPTMnet" id="B0BND0"/>
<dbReference type="PhosphoSitePlus" id="B0BND0"/>
<dbReference type="PaxDb" id="10116-ENSRNOP00000013005"/>
<dbReference type="Ensembl" id="ENSRNOT00000013005.9">
    <property type="protein sequence ID" value="ENSRNOP00000013005.5"/>
    <property type="gene ID" value="ENSRNOG00000009660.9"/>
</dbReference>
<dbReference type="GeneID" id="306460"/>
<dbReference type="AGR" id="RGD:1311645"/>
<dbReference type="RGD" id="1311645">
    <property type="gene designation" value="Enpp6"/>
</dbReference>
<dbReference type="eggNOG" id="KOG2645">
    <property type="taxonomic scope" value="Eukaryota"/>
</dbReference>
<dbReference type="GeneTree" id="ENSGT00940000158457"/>
<dbReference type="InParanoid" id="B0BND0"/>
<dbReference type="OMA" id="NVSMYYW"/>
<dbReference type="OrthoDB" id="415411at2759"/>
<dbReference type="PhylomeDB" id="B0BND0"/>
<dbReference type="TreeFam" id="TF330032"/>
<dbReference type="Reactome" id="R-RNO-6814848">
    <property type="pathway name" value="Glycerophospholipid catabolism"/>
</dbReference>
<dbReference type="PRO" id="PR:B0BND0"/>
<dbReference type="Proteomes" id="UP000002494">
    <property type="component" value="Chromosome 16"/>
</dbReference>
<dbReference type="Bgee" id="ENSRNOG00000009660">
    <property type="expression patterns" value="Expressed in adult mammalian kidney and 6 other cell types or tissues"/>
</dbReference>
<dbReference type="ExpressionAtlas" id="B0BND0">
    <property type="expression patterns" value="baseline and differential"/>
</dbReference>
<dbReference type="GO" id="GO:0005576">
    <property type="term" value="C:extracellular region"/>
    <property type="evidence" value="ECO:0000266"/>
    <property type="project" value="RGD"/>
</dbReference>
<dbReference type="GO" id="GO:0005886">
    <property type="term" value="C:plasma membrane"/>
    <property type="evidence" value="ECO:0000250"/>
    <property type="project" value="UniProtKB"/>
</dbReference>
<dbReference type="GO" id="GO:0098552">
    <property type="term" value="C:side of membrane"/>
    <property type="evidence" value="ECO:0007669"/>
    <property type="project" value="UniProtKB-KW"/>
</dbReference>
<dbReference type="GO" id="GO:0047390">
    <property type="term" value="F:glycerophosphocholine cholinephosphodiesterase activity"/>
    <property type="evidence" value="ECO:0000250"/>
    <property type="project" value="UniProtKB"/>
</dbReference>
<dbReference type="GO" id="GO:0008889">
    <property type="term" value="F:glycerophosphodiester phosphodiesterase activity"/>
    <property type="evidence" value="ECO:0000266"/>
    <property type="project" value="RGD"/>
</dbReference>
<dbReference type="GO" id="GO:0046872">
    <property type="term" value="F:metal ion binding"/>
    <property type="evidence" value="ECO:0007669"/>
    <property type="project" value="UniProtKB-KW"/>
</dbReference>
<dbReference type="GO" id="GO:0008081">
    <property type="term" value="F:phosphoric diester hydrolase activity"/>
    <property type="evidence" value="ECO:0000250"/>
    <property type="project" value="UniProtKB"/>
</dbReference>
<dbReference type="GO" id="GO:0019695">
    <property type="term" value="P:choline metabolic process"/>
    <property type="evidence" value="ECO:0000250"/>
    <property type="project" value="UniProtKB"/>
</dbReference>
<dbReference type="GO" id="GO:0016042">
    <property type="term" value="P:lipid catabolic process"/>
    <property type="evidence" value="ECO:0007669"/>
    <property type="project" value="UniProtKB-KW"/>
</dbReference>
<dbReference type="GO" id="GO:0006629">
    <property type="term" value="P:lipid metabolic process"/>
    <property type="evidence" value="ECO:0000250"/>
    <property type="project" value="UniProtKB"/>
</dbReference>
<dbReference type="CDD" id="cd16018">
    <property type="entry name" value="Enpp"/>
    <property type="match status" value="1"/>
</dbReference>
<dbReference type="FunFam" id="3.30.1360.180:FF:000001">
    <property type="entry name" value="Ectonucleotide pyrophosphatase/phosphodiesterase family member 6"/>
    <property type="match status" value="1"/>
</dbReference>
<dbReference type="FunFam" id="3.40.720.10:FF:000029">
    <property type="entry name" value="ectonucleotide pyrophosphatase/phosphodiesterase family member 6"/>
    <property type="match status" value="1"/>
</dbReference>
<dbReference type="Gene3D" id="3.30.1360.180">
    <property type="match status" value="1"/>
</dbReference>
<dbReference type="Gene3D" id="3.40.720.10">
    <property type="entry name" value="Alkaline Phosphatase, subunit A"/>
    <property type="match status" value="1"/>
</dbReference>
<dbReference type="InterPro" id="IPR017850">
    <property type="entry name" value="Alkaline_phosphatase_core_sf"/>
</dbReference>
<dbReference type="InterPro" id="IPR002591">
    <property type="entry name" value="Phosphodiest/P_Trfase"/>
</dbReference>
<dbReference type="PANTHER" id="PTHR10151">
    <property type="entry name" value="ECTONUCLEOTIDE PYROPHOSPHATASE/PHOSPHODIESTERASE"/>
    <property type="match status" value="1"/>
</dbReference>
<dbReference type="PANTHER" id="PTHR10151:SF66">
    <property type="entry name" value="GLYCEROPHOSPHOCHOLINE CHOLINEPHOSPHODIESTERASE ENPP6"/>
    <property type="match status" value="1"/>
</dbReference>
<dbReference type="Pfam" id="PF01663">
    <property type="entry name" value="Phosphodiest"/>
    <property type="match status" value="1"/>
</dbReference>
<dbReference type="SUPFAM" id="SSF53649">
    <property type="entry name" value="Alkaline phosphatase-like"/>
    <property type="match status" value="1"/>
</dbReference>
<reference key="1">
    <citation type="journal article" date="2004" name="Genome Res.">
        <title>The status, quality, and expansion of the NIH full-length cDNA project: the Mammalian Gene Collection (MGC).</title>
        <authorList>
            <consortium name="The MGC Project Team"/>
        </authorList>
    </citation>
    <scope>NUCLEOTIDE SEQUENCE [LARGE SCALE MRNA]</scope>
    <source>
        <tissue>Kidney</tissue>
    </source>
</reference>
<reference key="2">
    <citation type="journal article" date="2012" name="Nat. Commun.">
        <title>Quantitative maps of protein phosphorylation sites across 14 different rat organs and tissues.</title>
        <authorList>
            <person name="Lundby A."/>
            <person name="Secher A."/>
            <person name="Lage K."/>
            <person name="Nordsborg N.B."/>
            <person name="Dmytriyev A."/>
            <person name="Lundby C."/>
            <person name="Olsen J.V."/>
        </authorList>
    </citation>
    <scope>PHOSPHORYLATION [LARGE SCALE ANALYSIS] AT SER-71</scope>
    <scope>IDENTIFICATION BY MASS SPECTROMETRY [LARGE SCALE ANALYSIS]</scope>
</reference>
<reference key="3">
    <citation type="journal article" date="2013" name="J. Proteome Res.">
        <title>Site-specific glycan-peptide analysis for determination of N-glycoproteome heterogeneity.</title>
        <authorList>
            <person name="Parker B.L."/>
            <person name="Thaysen-Andersen M."/>
            <person name="Solis N."/>
            <person name="Scott N.E."/>
            <person name="Larsen M.R."/>
            <person name="Graham M.E."/>
            <person name="Packer N.H."/>
            <person name="Cordwell S.J."/>
        </authorList>
    </citation>
    <scope>GLYCOSYLATION [LARGE SCALE ANALYSIS] AT ASN-341</scope>
    <scope>IDENTIFICATION BY MASS SPECTROMETRY [LARGE SCALE ANALYSIS]</scope>
    <source>
        <tissue>Brain</tissue>
    </source>
</reference>
<evidence type="ECO:0000250" key="1"/>
<evidence type="ECO:0000250" key="2">
    <source>
        <dbReference type="UniProtKB" id="Q8BGN3"/>
    </source>
</evidence>
<evidence type="ECO:0000255" key="3"/>
<evidence type="ECO:0000305" key="4"/>
<evidence type="ECO:0000312" key="5">
    <source>
        <dbReference type="RGD" id="1311645"/>
    </source>
</evidence>
<evidence type="ECO:0007744" key="6">
    <source>
    </source>
</evidence>
<evidence type="ECO:0007744" key="7">
    <source>
    </source>
</evidence>
<keyword id="KW-1003">Cell membrane</keyword>
<keyword id="KW-1015">Disulfide bond</keyword>
<keyword id="KW-0325">Glycoprotein</keyword>
<keyword id="KW-0336">GPI-anchor</keyword>
<keyword id="KW-0378">Hydrolase</keyword>
<keyword id="KW-0442">Lipid degradation</keyword>
<keyword id="KW-0443">Lipid metabolism</keyword>
<keyword id="KW-0449">Lipoprotein</keyword>
<keyword id="KW-0472">Membrane</keyword>
<keyword id="KW-0479">Metal-binding</keyword>
<keyword id="KW-0597">Phosphoprotein</keyword>
<keyword id="KW-1185">Reference proteome</keyword>
<keyword id="KW-0732">Signal</keyword>
<keyword id="KW-0862">Zinc</keyword>
<feature type="signal peptide" evidence="1">
    <location>
        <begin position="1"/>
        <end position="22"/>
    </location>
</feature>
<feature type="chain" id="PRO_0000366924" description="Glycerophosphocholine cholinephosphodiesterase ENPP6">
    <location>
        <begin position="23"/>
        <end position="419"/>
    </location>
</feature>
<feature type="propeptide" id="PRO_0000420894" description="Removed in mature form" evidence="3">
    <location>
        <begin position="420"/>
        <end position="440"/>
    </location>
</feature>
<feature type="active site" description="Nucleophile" evidence="3">
    <location>
        <position position="71"/>
    </location>
</feature>
<feature type="binding site" evidence="2">
    <location>
        <position position="32"/>
    </location>
    <ligand>
        <name>substrate</name>
    </ligand>
</feature>
<feature type="binding site" evidence="2">
    <location>
        <position position="32"/>
    </location>
    <ligand>
        <name>Zn(2+)</name>
        <dbReference type="ChEBI" id="CHEBI:29105"/>
        <label>1</label>
        <note>catalytic</note>
    </ligand>
</feature>
<feature type="binding site" evidence="2">
    <location>
        <position position="71"/>
    </location>
    <ligand>
        <name>substrate</name>
    </ligand>
</feature>
<feature type="binding site" evidence="2">
    <location>
        <position position="71"/>
    </location>
    <ligand>
        <name>Zn(2+)</name>
        <dbReference type="ChEBI" id="CHEBI:29105"/>
        <label>1</label>
        <note>catalytic</note>
    </ligand>
</feature>
<feature type="binding site" evidence="2">
    <location>
        <position position="92"/>
    </location>
    <ligand>
        <name>substrate</name>
    </ligand>
</feature>
<feature type="binding site" evidence="2">
    <location>
        <position position="193"/>
    </location>
    <ligand>
        <name>substrate</name>
    </ligand>
</feature>
<feature type="binding site" evidence="2">
    <location>
        <position position="193"/>
    </location>
    <ligand>
        <name>Zn(2+)</name>
        <dbReference type="ChEBI" id="CHEBI:29105"/>
        <label>2</label>
        <note>catalytic</note>
    </ligand>
</feature>
<feature type="binding site" evidence="2">
    <location>
        <position position="197"/>
    </location>
    <ligand>
        <name>Zn(2+)</name>
        <dbReference type="ChEBI" id="CHEBI:29105"/>
        <label>2</label>
        <note>catalytic</note>
    </ligand>
</feature>
<feature type="binding site" evidence="2">
    <location>
        <position position="240"/>
    </location>
    <ligand>
        <name>Zn(2+)</name>
        <dbReference type="ChEBI" id="CHEBI:29105"/>
        <label>1</label>
        <note>catalytic</note>
    </ligand>
</feature>
<feature type="binding site" evidence="2">
    <location>
        <position position="241"/>
    </location>
    <ligand>
        <name>substrate</name>
    </ligand>
</feature>
<feature type="binding site" evidence="2">
    <location>
        <position position="241"/>
    </location>
    <ligand>
        <name>Zn(2+)</name>
        <dbReference type="ChEBI" id="CHEBI:29105"/>
        <label>1</label>
        <note>catalytic</note>
    </ligand>
</feature>
<feature type="binding site" evidence="2">
    <location>
        <position position="354"/>
    </location>
    <ligand>
        <name>substrate</name>
    </ligand>
</feature>
<feature type="binding site" evidence="2">
    <location>
        <position position="354"/>
    </location>
    <ligand>
        <name>Zn(2+)</name>
        <dbReference type="ChEBI" id="CHEBI:29105"/>
        <label>2</label>
        <note>catalytic</note>
    </ligand>
</feature>
<feature type="modified residue" description="Phosphoserine" evidence="6">
    <location>
        <position position="71"/>
    </location>
</feature>
<feature type="lipid moiety-binding region" description="GPI-anchor amidated serine" evidence="3">
    <location>
        <position position="419"/>
    </location>
</feature>
<feature type="glycosylation site" description="N-linked (GlcNAc...) asparagine" evidence="2">
    <location>
        <position position="100"/>
    </location>
</feature>
<feature type="glycosylation site" description="N-linked (GlcNAc...) asparagine" evidence="2">
    <location>
        <position position="118"/>
    </location>
</feature>
<feature type="glycosylation site" description="N-linked (GlcNAc...) asparagine" evidence="7">
    <location>
        <position position="341"/>
    </location>
</feature>
<feature type="glycosylation site" description="N-linked (GlcNAc...) asparagine" evidence="2">
    <location>
        <position position="404"/>
    </location>
</feature>
<feature type="disulfide bond" evidence="2">
    <location>
        <begin position="142"/>
        <end position="154"/>
    </location>
</feature>
<feature type="disulfide bond" description="Interchain" evidence="1">
    <location>
        <position position="412"/>
    </location>
</feature>
<comment type="function">
    <text evidence="2">Choline-specific glycerophosphodiesterase that hydrolyzes glycerophosphocholine (GPC) and lysophosphatidylcholine (LPC) and contributes to supplying choline to the cells. Has a preference for LPC with short (12:0 and 14:0) or polyunsaturated (18:2 and 20:4) fatty acids. In vitro, hydrolyzes only choline-containing lysophospholipids, such as sphingosylphosphorylcholine (SPC), platelet-activating factor (PAF) and lysoPAF, but not other lysophospholipids.</text>
</comment>
<comment type="catalytic activity">
    <reaction evidence="2">
        <text>sn-glycerol 3-phosphocholine + H2O = phosphocholine + glycerol + H(+)</text>
        <dbReference type="Rhea" id="RHEA:19545"/>
        <dbReference type="ChEBI" id="CHEBI:15377"/>
        <dbReference type="ChEBI" id="CHEBI:15378"/>
        <dbReference type="ChEBI" id="CHEBI:16870"/>
        <dbReference type="ChEBI" id="CHEBI:17754"/>
        <dbReference type="ChEBI" id="CHEBI:295975"/>
        <dbReference type="EC" id="3.1.4.38"/>
    </reaction>
    <physiologicalReaction direction="left-to-right" evidence="2">
        <dbReference type="Rhea" id="RHEA:19546"/>
    </physiologicalReaction>
</comment>
<comment type="catalytic activity">
    <reaction evidence="2">
        <text>a 1-acyl-sn-glycero-3-phosphocholine + H2O = a 1-acyl-sn-glycerol + phosphocholine + H(+)</text>
        <dbReference type="Rhea" id="RHEA:44720"/>
        <dbReference type="ChEBI" id="CHEBI:15377"/>
        <dbReference type="ChEBI" id="CHEBI:15378"/>
        <dbReference type="ChEBI" id="CHEBI:58168"/>
        <dbReference type="ChEBI" id="CHEBI:64683"/>
        <dbReference type="ChEBI" id="CHEBI:295975"/>
    </reaction>
    <physiologicalReaction direction="left-to-right" evidence="2">
        <dbReference type="Rhea" id="RHEA:44721"/>
    </physiologicalReaction>
</comment>
<comment type="catalytic activity">
    <reaction evidence="2">
        <text>a 1-O-alkyl-sn-glycero-3-phosphocholine + H2O = a 1-O-alkyl-sn-glycerol + phosphocholine + H(+)</text>
        <dbReference type="Rhea" id="RHEA:36083"/>
        <dbReference type="ChEBI" id="CHEBI:15377"/>
        <dbReference type="ChEBI" id="CHEBI:15378"/>
        <dbReference type="ChEBI" id="CHEBI:15850"/>
        <dbReference type="ChEBI" id="CHEBI:30909"/>
        <dbReference type="ChEBI" id="CHEBI:295975"/>
    </reaction>
    <physiologicalReaction direction="left-to-right" evidence="2">
        <dbReference type="Rhea" id="RHEA:36084"/>
    </physiologicalReaction>
</comment>
<comment type="catalytic activity">
    <reaction evidence="2">
        <text>1-dodecanoyl-sn-glycero-3-phosphocholine + H2O = 1-dodecanoyl-sn-glycerol + phosphocholine + H(+)</text>
        <dbReference type="Rhea" id="RHEA:41127"/>
        <dbReference type="ChEBI" id="CHEBI:15377"/>
        <dbReference type="ChEBI" id="CHEBI:15378"/>
        <dbReference type="ChEBI" id="CHEBI:74966"/>
        <dbReference type="ChEBI" id="CHEBI:75529"/>
        <dbReference type="ChEBI" id="CHEBI:295975"/>
    </reaction>
    <physiologicalReaction direction="left-to-right" evidence="2">
        <dbReference type="Rhea" id="RHEA:41128"/>
    </physiologicalReaction>
</comment>
<comment type="catalytic activity">
    <reaction evidence="2">
        <text>1-hexadecanoyl-sn-glycero-3-phosphocholine + H2O = 1-hexadecanoyl-sn-glycerol + phosphocholine + H(+)</text>
        <dbReference type="Rhea" id="RHEA:41119"/>
        <dbReference type="ChEBI" id="CHEBI:15377"/>
        <dbReference type="ChEBI" id="CHEBI:15378"/>
        <dbReference type="ChEBI" id="CHEBI:72998"/>
        <dbReference type="ChEBI" id="CHEBI:75542"/>
        <dbReference type="ChEBI" id="CHEBI:295975"/>
    </reaction>
    <physiologicalReaction direction="left-to-right" evidence="2">
        <dbReference type="Rhea" id="RHEA:41120"/>
    </physiologicalReaction>
</comment>
<comment type="catalytic activity">
    <reaction evidence="2">
        <text>1-(5Z,8Z,11Z,14Z-eicosatetraenoyl)-sn-glycero-3-phosphocholine + H2O = 1-(5Z,8Z,11Z,14Z-eicosatetraenoyl)-sn-glycerol + phosphocholine + H(+)</text>
        <dbReference type="Rhea" id="RHEA:41003"/>
        <dbReference type="ChEBI" id="CHEBI:15377"/>
        <dbReference type="ChEBI" id="CHEBI:15378"/>
        <dbReference type="ChEBI" id="CHEBI:34071"/>
        <dbReference type="ChEBI" id="CHEBI:74344"/>
        <dbReference type="ChEBI" id="CHEBI:295975"/>
    </reaction>
    <physiologicalReaction direction="left-to-right" evidence="2">
        <dbReference type="Rhea" id="RHEA:41004"/>
    </physiologicalReaction>
</comment>
<comment type="catalytic activity">
    <reaction evidence="2">
        <text>1-tetradecanoyl-sn-glycero-3-phosphocholine + H2O = 1-tetradecanoyl-sn-glycerol + phosphocholine + H(+)</text>
        <dbReference type="Rhea" id="RHEA:40999"/>
        <dbReference type="ChEBI" id="CHEBI:15377"/>
        <dbReference type="ChEBI" id="CHEBI:15378"/>
        <dbReference type="ChEBI" id="CHEBI:64489"/>
        <dbReference type="ChEBI" id="CHEBI:75536"/>
        <dbReference type="ChEBI" id="CHEBI:295975"/>
    </reaction>
    <physiologicalReaction direction="left-to-right" evidence="2">
        <dbReference type="Rhea" id="RHEA:41000"/>
    </physiologicalReaction>
</comment>
<comment type="catalytic activity">
    <reaction evidence="2">
        <text>sphing-4-enine-phosphocholine + H2O = sphing-4-enine + phosphocholine + H(+)</text>
        <dbReference type="Rhea" id="RHEA:41095"/>
        <dbReference type="ChEBI" id="CHEBI:15377"/>
        <dbReference type="ChEBI" id="CHEBI:15378"/>
        <dbReference type="ChEBI" id="CHEBI:57756"/>
        <dbReference type="ChEBI" id="CHEBI:58906"/>
        <dbReference type="ChEBI" id="CHEBI:295975"/>
    </reaction>
    <physiologicalReaction direction="left-to-right" evidence="2">
        <dbReference type="Rhea" id="RHEA:41096"/>
    </physiologicalReaction>
</comment>
<comment type="catalytic activity">
    <reaction evidence="2">
        <text>1-(9Z-octadecenoyl)-sn-glycero-3-phosphocholine + H2O = 1-(9Z-octadecenoyl)-sn-glycerol + phosphocholine + H(+)</text>
        <dbReference type="Rhea" id="RHEA:41091"/>
        <dbReference type="ChEBI" id="CHEBI:15377"/>
        <dbReference type="ChEBI" id="CHEBI:15378"/>
        <dbReference type="ChEBI" id="CHEBI:28610"/>
        <dbReference type="ChEBI" id="CHEBI:75757"/>
        <dbReference type="ChEBI" id="CHEBI:295975"/>
    </reaction>
    <physiologicalReaction direction="left-to-right" evidence="2">
        <dbReference type="Rhea" id="RHEA:41092"/>
    </physiologicalReaction>
</comment>
<comment type="catalytic activity">
    <reaction evidence="2">
        <text>1-(9Z,12Z)-octadecadienoyl-sn-glycero-3-phosphocholine + H2O = 1-(9Z,12Z-octadecadienoyl)-sn-glycerol + phosphocholine + H(+)</text>
        <dbReference type="Rhea" id="RHEA:41115"/>
        <dbReference type="ChEBI" id="CHEBI:15377"/>
        <dbReference type="ChEBI" id="CHEBI:15378"/>
        <dbReference type="ChEBI" id="CHEBI:28733"/>
        <dbReference type="ChEBI" id="CHEBI:75561"/>
        <dbReference type="ChEBI" id="CHEBI:295975"/>
    </reaction>
    <physiologicalReaction direction="left-to-right" evidence="2">
        <dbReference type="Rhea" id="RHEA:41116"/>
    </physiologicalReaction>
</comment>
<comment type="catalytic activity">
    <reaction evidence="2">
        <text>glycero-2-phosphocholine + H2O = phosphocholine + glycerol + H(+)</text>
        <dbReference type="Rhea" id="RHEA:61684"/>
        <dbReference type="ChEBI" id="CHEBI:15377"/>
        <dbReference type="ChEBI" id="CHEBI:15378"/>
        <dbReference type="ChEBI" id="CHEBI:17754"/>
        <dbReference type="ChEBI" id="CHEBI:144950"/>
        <dbReference type="ChEBI" id="CHEBI:295975"/>
    </reaction>
    <physiologicalReaction direction="left-to-right" evidence="2">
        <dbReference type="Rhea" id="RHEA:61685"/>
    </physiologicalReaction>
</comment>
<comment type="cofactor">
    <cofactor evidence="2">
        <name>Zn(2+)</name>
        <dbReference type="ChEBI" id="CHEBI:29105"/>
    </cofactor>
    <text evidence="2">Binds 2 Zn(2+) ions per subunit.</text>
</comment>
<comment type="activity regulation">
    <text evidence="1">Inhibited by EDTA and EGTA in vitro.</text>
</comment>
<comment type="subunit">
    <text evidence="1 2">Homodimer; disulfide-linked. Homotetramer.</text>
</comment>
<comment type="subcellular location">
    <subcellularLocation>
        <location evidence="1">Cell membrane</location>
        <topology evidence="1">Lipid-anchor</topology>
        <topology evidence="1">GPI-anchor</topology>
    </subcellularLocation>
</comment>
<comment type="similarity">
    <text evidence="4">Belongs to the nucleotide pyrophosphatase/phosphodiesterase family.</text>
</comment>
<protein>
    <recommendedName>
        <fullName evidence="4">Glycerophosphocholine cholinephosphodiesterase ENPP6</fullName>
        <shortName>GPC-Cpde</shortName>
        <ecNumber evidence="2">3.1.4.-</ecNumber>
        <ecNumber evidence="2">3.1.4.38</ecNumber>
    </recommendedName>
    <alternativeName>
        <fullName evidence="2">Choline-specific glycerophosphodiester phosphodiesterase</fullName>
    </alternativeName>
    <alternativeName>
        <fullName>Ectonucleotide pyrophosphatase/phosphodiesterase family member 6</fullName>
        <shortName>E-NPP 6</shortName>
        <shortName>NPP-6</shortName>
    </alternativeName>
</protein>
<name>ENPP6_RAT</name>
<accession>B0BND0</accession>
<organism>
    <name type="scientific">Rattus norvegicus</name>
    <name type="common">Rat</name>
    <dbReference type="NCBI Taxonomy" id="10116"/>
    <lineage>
        <taxon>Eukaryota</taxon>
        <taxon>Metazoa</taxon>
        <taxon>Chordata</taxon>
        <taxon>Craniata</taxon>
        <taxon>Vertebrata</taxon>
        <taxon>Euteleostomi</taxon>
        <taxon>Mammalia</taxon>
        <taxon>Eutheria</taxon>
        <taxon>Euarchontoglires</taxon>
        <taxon>Glires</taxon>
        <taxon>Rodentia</taxon>
        <taxon>Myomorpha</taxon>
        <taxon>Muroidea</taxon>
        <taxon>Muridae</taxon>
        <taxon>Murinae</taxon>
        <taxon>Rattus</taxon>
    </lineage>
</organism>
<sequence>MAGKLWTFLLLFGFSWVWPASAHRKLLVLLLDGFRSDYISEDALASLPGFREIVNRGVKVDYLTPDFPSLSYPNYYTLMTGRHCEVHQMIGNYMWDPRTNKSFDIGVNRDSLMPLWWNGSEPLWITLMKARRKVYMYYWPGCEVEILGVRPTYCLEYKNVPTDINFANAVSDALDSLKSGRADLAAIYHERIDVEGHHYGPSSPQRKDALKAVDTVLKYMTQWIQERGLQNDLNVILFSDHGMTDIFWMDKVIELSKYISLDDLQQVKDQGPVVSLWPVPEKHSEIYHKLRTVEHMTVYEKEAIPNRFYYKKGKFVSPLTLVADEGWFIAESREALPFWMNSTGKREGWQHGWHGYDNELMDMRGIFLAFGPDFKSNFRAAPIRSVDVYNIMCNVVGITPLPNNGSWSRVVCMLKSQTSSSPSIPPNSCALVLILLLYFV</sequence>
<gene>
    <name evidence="5" type="primary">Enpp6</name>
</gene>
<proteinExistence type="evidence at protein level"/>